<accession>P76407</accession>
<accession>O08008</accession>
<accession>O08011</accession>
<sequence>MAEFPASLLILNGKSTDNLPLREAIMLLREEGMTIHVRVTWEKGDAARYVEEARKFGVATVIAGGGDGTINEVSTALIQCEGDDIPALGILPLGTANDFATSVGIPEALDKALKLAIAGDAIAIDMAQVNKQTCFINMATGGFGTRITTETPEKLKAALGSVSYIIHGLMRMDTLQPDRCEIRGENFHWQGDALVIGIGNGRQAGGGQQLCPNALINDGLLQLRIFTGDEILPALVSTLKSDEDNPNIIEGASSWFDIQAPHDITFNLDGEPLSGQNFHIEILPAALRCRLPPDCPLLR</sequence>
<keyword id="KW-0002">3D-structure</keyword>
<keyword id="KW-0067">ATP-binding</keyword>
<keyword id="KW-0963">Cytoplasm</keyword>
<keyword id="KW-0418">Kinase</keyword>
<keyword id="KW-0444">Lipid biosynthesis</keyword>
<keyword id="KW-0443">Lipid metabolism</keyword>
<keyword id="KW-0460">Magnesium</keyword>
<keyword id="KW-0479">Metal-binding</keyword>
<keyword id="KW-0547">Nucleotide-binding</keyword>
<keyword id="KW-0594">Phospholipid biosynthesis</keyword>
<keyword id="KW-1208">Phospholipid metabolism</keyword>
<keyword id="KW-1185">Reference proteome</keyword>
<keyword id="KW-0808">Transferase</keyword>
<organism>
    <name type="scientific">Escherichia coli (strain K12)</name>
    <dbReference type="NCBI Taxonomy" id="83333"/>
    <lineage>
        <taxon>Bacteria</taxon>
        <taxon>Pseudomonadati</taxon>
        <taxon>Pseudomonadota</taxon>
        <taxon>Gammaproteobacteria</taxon>
        <taxon>Enterobacterales</taxon>
        <taxon>Enterobacteriaceae</taxon>
        <taxon>Escherichia</taxon>
    </lineage>
</organism>
<dbReference type="EC" id="2.7.1.-"/>
<dbReference type="EMBL" id="U00096">
    <property type="protein sequence ID" value="AAC75147.1"/>
    <property type="molecule type" value="Genomic_DNA"/>
</dbReference>
<dbReference type="EMBL" id="AP009048">
    <property type="protein sequence ID" value="BAA15939.1"/>
    <property type="molecule type" value="Genomic_DNA"/>
</dbReference>
<dbReference type="PIR" id="E64975">
    <property type="entry name" value="E64975"/>
</dbReference>
<dbReference type="RefSeq" id="NP_416590.1">
    <property type="nucleotide sequence ID" value="NC_000913.3"/>
</dbReference>
<dbReference type="RefSeq" id="WP_000807348.1">
    <property type="nucleotide sequence ID" value="NZ_LN832404.1"/>
</dbReference>
<dbReference type="PDB" id="2BON">
    <property type="method" value="X-ray"/>
    <property type="resolution" value="1.90 A"/>
    <property type="chains" value="A/B=1-299"/>
</dbReference>
<dbReference type="PDB" id="2JGR">
    <property type="method" value="X-ray"/>
    <property type="resolution" value="2.65 A"/>
    <property type="chains" value="A=1-299"/>
</dbReference>
<dbReference type="PDBsum" id="2BON"/>
<dbReference type="PDBsum" id="2JGR"/>
<dbReference type="SMR" id="P76407"/>
<dbReference type="BioGRID" id="4261758">
    <property type="interactions" value="21"/>
</dbReference>
<dbReference type="BioGRID" id="850972">
    <property type="interactions" value="3"/>
</dbReference>
<dbReference type="DIP" id="DIP-11889N"/>
<dbReference type="FunCoup" id="P76407">
    <property type="interactions" value="610"/>
</dbReference>
<dbReference type="IntAct" id="P76407">
    <property type="interactions" value="8"/>
</dbReference>
<dbReference type="STRING" id="511145.b2086"/>
<dbReference type="jPOST" id="P76407"/>
<dbReference type="PaxDb" id="511145-b2086"/>
<dbReference type="EnsemblBacteria" id="AAC75147">
    <property type="protein sequence ID" value="AAC75147"/>
    <property type="gene ID" value="b2086"/>
</dbReference>
<dbReference type="GeneID" id="946626"/>
<dbReference type="KEGG" id="ecj:JW2070"/>
<dbReference type="KEGG" id="eco:b2086"/>
<dbReference type="KEGG" id="ecoc:C3026_11715"/>
<dbReference type="PATRIC" id="fig|511145.12.peg.2163"/>
<dbReference type="EchoBASE" id="EB4111"/>
<dbReference type="eggNOG" id="COG1597">
    <property type="taxonomic scope" value="Bacteria"/>
</dbReference>
<dbReference type="HOGENOM" id="CLU_045532_1_1_6"/>
<dbReference type="InParanoid" id="P76407"/>
<dbReference type="OMA" id="YFMNIAA"/>
<dbReference type="OrthoDB" id="142078at2"/>
<dbReference type="PhylomeDB" id="P76407"/>
<dbReference type="BioCyc" id="EcoCyc:G7123-MONOMER"/>
<dbReference type="BioCyc" id="MetaCyc:G7123-MONOMER"/>
<dbReference type="EvolutionaryTrace" id="P76407"/>
<dbReference type="PRO" id="PR:P76407"/>
<dbReference type="Proteomes" id="UP000000625">
    <property type="component" value="Chromosome"/>
</dbReference>
<dbReference type="GO" id="GO:0005737">
    <property type="term" value="C:cytoplasm"/>
    <property type="evidence" value="ECO:0007669"/>
    <property type="project" value="UniProtKB-SubCell"/>
</dbReference>
<dbReference type="GO" id="GO:0005524">
    <property type="term" value="F:ATP binding"/>
    <property type="evidence" value="ECO:0007669"/>
    <property type="project" value="UniProtKB-UniRule"/>
</dbReference>
<dbReference type="GO" id="GO:0001727">
    <property type="term" value="F:lipid kinase activity"/>
    <property type="evidence" value="ECO:0000314"/>
    <property type="project" value="EcoCyc"/>
</dbReference>
<dbReference type="GO" id="GO:0000287">
    <property type="term" value="F:magnesium ion binding"/>
    <property type="evidence" value="ECO:0007669"/>
    <property type="project" value="UniProtKB-UniRule"/>
</dbReference>
<dbReference type="GO" id="GO:0008654">
    <property type="term" value="P:phospholipid biosynthetic process"/>
    <property type="evidence" value="ECO:0007669"/>
    <property type="project" value="UniProtKB-UniRule"/>
</dbReference>
<dbReference type="DisProt" id="DP01981"/>
<dbReference type="FunFam" id="2.60.200.40:FF:000008">
    <property type="entry name" value="Probable lipid kinase YegS"/>
    <property type="match status" value="1"/>
</dbReference>
<dbReference type="FunFam" id="3.40.50.10330:FF:000008">
    <property type="entry name" value="Probable lipid kinase YegS"/>
    <property type="match status" value="1"/>
</dbReference>
<dbReference type="Gene3D" id="2.60.200.40">
    <property type="match status" value="1"/>
</dbReference>
<dbReference type="Gene3D" id="3.40.50.10330">
    <property type="entry name" value="Probable inorganic polyphosphate/atp-NAD kinase, domain 1"/>
    <property type="match status" value="1"/>
</dbReference>
<dbReference type="HAMAP" id="MF_01377">
    <property type="entry name" value="YegS"/>
    <property type="match status" value="1"/>
</dbReference>
<dbReference type="InterPro" id="IPR017438">
    <property type="entry name" value="ATP-NAD_kinase_N"/>
</dbReference>
<dbReference type="InterPro" id="IPR005218">
    <property type="entry name" value="Diacylglycerol/lipid_kinase"/>
</dbReference>
<dbReference type="InterPro" id="IPR001206">
    <property type="entry name" value="Diacylglycerol_kinase_cat_dom"/>
</dbReference>
<dbReference type="InterPro" id="IPR022433">
    <property type="entry name" value="Lip_kinase_YegS"/>
</dbReference>
<dbReference type="InterPro" id="IPR050187">
    <property type="entry name" value="Lipid_Phosphate_FormReg"/>
</dbReference>
<dbReference type="InterPro" id="IPR016064">
    <property type="entry name" value="NAD/diacylglycerol_kinase_sf"/>
</dbReference>
<dbReference type="InterPro" id="IPR045540">
    <property type="entry name" value="YegS/DAGK_C"/>
</dbReference>
<dbReference type="NCBIfam" id="TIGR03702">
    <property type="entry name" value="lip_kinase_YegS"/>
    <property type="match status" value="1"/>
</dbReference>
<dbReference type="NCBIfam" id="NF009602">
    <property type="entry name" value="PRK13054.1"/>
    <property type="match status" value="1"/>
</dbReference>
<dbReference type="NCBIfam" id="TIGR00147">
    <property type="entry name" value="YegS/Rv2252/BmrU family lipid kinase"/>
    <property type="match status" value="1"/>
</dbReference>
<dbReference type="PANTHER" id="PTHR12358:SF106">
    <property type="entry name" value="LIPID KINASE YEGS"/>
    <property type="match status" value="1"/>
</dbReference>
<dbReference type="PANTHER" id="PTHR12358">
    <property type="entry name" value="SPHINGOSINE KINASE"/>
    <property type="match status" value="1"/>
</dbReference>
<dbReference type="Pfam" id="PF00781">
    <property type="entry name" value="DAGK_cat"/>
    <property type="match status" value="1"/>
</dbReference>
<dbReference type="Pfam" id="PF19279">
    <property type="entry name" value="YegS_C"/>
    <property type="match status" value="1"/>
</dbReference>
<dbReference type="SMART" id="SM00046">
    <property type="entry name" value="DAGKc"/>
    <property type="match status" value="1"/>
</dbReference>
<dbReference type="SUPFAM" id="SSF111331">
    <property type="entry name" value="NAD kinase/diacylglycerol kinase-like"/>
    <property type="match status" value="1"/>
</dbReference>
<dbReference type="PROSITE" id="PS50146">
    <property type="entry name" value="DAGK"/>
    <property type="match status" value="1"/>
</dbReference>
<name>YEGS_ECOLI</name>
<reference key="1">
    <citation type="journal article" date="1996" name="DNA Res.">
        <title>A 460-kb DNA sequence of the Escherichia coli K-12 genome corresponding to the 40.1-50.0 min region on the linkage map.</title>
        <authorList>
            <person name="Itoh T."/>
            <person name="Aiba H."/>
            <person name="Baba T."/>
            <person name="Fujita K."/>
            <person name="Hayashi K."/>
            <person name="Inada T."/>
            <person name="Isono K."/>
            <person name="Kasai H."/>
            <person name="Kimura S."/>
            <person name="Kitakawa M."/>
            <person name="Kitagawa M."/>
            <person name="Makino K."/>
            <person name="Miki T."/>
            <person name="Mizobuchi K."/>
            <person name="Mori H."/>
            <person name="Mori T."/>
            <person name="Motomura K."/>
            <person name="Nakade S."/>
            <person name="Nakamura Y."/>
            <person name="Nashimoto H."/>
            <person name="Nishio Y."/>
            <person name="Oshima T."/>
            <person name="Saito N."/>
            <person name="Sampei G."/>
            <person name="Seki Y."/>
            <person name="Sivasundaram S."/>
            <person name="Tagami H."/>
            <person name="Takeda J."/>
            <person name="Takemoto K."/>
            <person name="Wada C."/>
            <person name="Yamamoto Y."/>
            <person name="Horiuchi T."/>
        </authorList>
    </citation>
    <scope>NUCLEOTIDE SEQUENCE [LARGE SCALE GENOMIC DNA]</scope>
    <source>
        <strain>K12 / W3110 / ATCC 27325 / DSM 5911</strain>
    </source>
</reference>
<reference key="2">
    <citation type="journal article" date="1997" name="Science">
        <title>The complete genome sequence of Escherichia coli K-12.</title>
        <authorList>
            <person name="Blattner F.R."/>
            <person name="Plunkett G. III"/>
            <person name="Bloch C.A."/>
            <person name="Perna N.T."/>
            <person name="Burland V."/>
            <person name="Riley M."/>
            <person name="Collado-Vides J."/>
            <person name="Glasner J.D."/>
            <person name="Rode C.K."/>
            <person name="Mayhew G.F."/>
            <person name="Gregor J."/>
            <person name="Davis N.W."/>
            <person name="Kirkpatrick H.A."/>
            <person name="Goeden M.A."/>
            <person name="Rose D.J."/>
            <person name="Mau B."/>
            <person name="Shao Y."/>
        </authorList>
    </citation>
    <scope>NUCLEOTIDE SEQUENCE [LARGE SCALE GENOMIC DNA]</scope>
    <source>
        <strain>K12 / MG1655 / ATCC 47076</strain>
    </source>
</reference>
<reference key="3">
    <citation type="journal article" date="2006" name="Mol. Syst. Biol.">
        <title>Highly accurate genome sequences of Escherichia coli K-12 strains MG1655 and W3110.</title>
        <authorList>
            <person name="Hayashi K."/>
            <person name="Morooka N."/>
            <person name="Yamamoto Y."/>
            <person name="Fujita K."/>
            <person name="Isono K."/>
            <person name="Choi S."/>
            <person name="Ohtsubo E."/>
            <person name="Baba T."/>
            <person name="Wanner B.L."/>
            <person name="Mori H."/>
            <person name="Horiuchi T."/>
        </authorList>
    </citation>
    <scope>NUCLEOTIDE SEQUENCE [LARGE SCALE GENOMIC DNA]</scope>
    <source>
        <strain>K12 / W3110 / ATCC 27325 / DSM 5911</strain>
    </source>
</reference>
<reference key="4">
    <citation type="journal article" date="2006" name="Acta Crystallogr. F">
        <title>Expression, purification, crystallization and preliminary diffraction studies of the mammalian DAG kinase homologue yegS from Escherichia coli.</title>
        <authorList>
            <person name="Bakali H.M.A."/>
            <person name="Nordlund P."/>
            <person name="Hallberg B.M."/>
        </authorList>
    </citation>
    <scope>SUBUNIT</scope>
    <scope>CRYSTALLIZATION</scope>
    <source>
        <strain>K12</strain>
    </source>
</reference>
<reference key="5">
    <citation type="journal article" date="2007" name="J. Biol. Chem.">
        <title>Crystal structure of yegS, a homologue to the mammalian diacylglycerol kinases, reveals a novel regulatory metal binding site.</title>
        <authorList>
            <person name="Bakali H.M.A."/>
            <person name="Herman M.D."/>
            <person name="Johnson K.A."/>
            <person name="Kelly A.A."/>
            <person name="Wieslander A."/>
            <person name="Hallberg B.M."/>
            <person name="Nordlund P."/>
        </authorList>
    </citation>
    <scope>X-RAY CRYSTALLOGRAPHY (1.9 ANGSTROMS) OF APOENZYME AND IN COMPLEX WITH ADP AND MAGNESIUM</scope>
    <scope>CHARACTERIZATION</scope>
    <scope>COFACTOR</scope>
    <scope>SUBCELLULAR LOCATION</scope>
    <source>
        <strain>K12</strain>
    </source>
</reference>
<evidence type="ECO:0000250" key="1"/>
<evidence type="ECO:0000269" key="2">
    <source>
    </source>
</evidence>
<evidence type="ECO:0000269" key="3">
    <source>
    </source>
</evidence>
<evidence type="ECO:0000305" key="4"/>
<evidence type="ECO:0007829" key="5">
    <source>
        <dbReference type="PDB" id="2BON"/>
    </source>
</evidence>
<evidence type="ECO:0007829" key="6">
    <source>
        <dbReference type="PDB" id="2JGR"/>
    </source>
</evidence>
<proteinExistence type="evidence at protein level"/>
<comment type="function">
    <text>In vitro phosphorylates phosphatidylglycerol but not diacylglycerol; the in vivo substrate is unknown.</text>
</comment>
<comment type="cofactor">
    <cofactor evidence="3">
        <name>Mg(2+)</name>
        <dbReference type="ChEBI" id="CHEBI:18420"/>
    </cofactor>
    <cofactor evidence="3">
        <name>Ca(2+)</name>
        <dbReference type="ChEBI" id="CHEBI:29108"/>
    </cofactor>
    <text evidence="3">Binds 1 Mg(2+) ion per subunit. Ca(2+) may be able to substitute.</text>
</comment>
<comment type="biophysicochemical properties">
    <kinetics>
        <KM>0.7 mM for phosphatidylglycerol</KM>
        <Vmax>29.7 nmol/min/mg enzyme</Vmax>
    </kinetics>
    <phDependence>
        <text>Optimum pH is 7.5. Active from pH 5 to 9.</text>
    </phDependence>
</comment>
<comment type="subunit">
    <text evidence="2 3">Monomer.</text>
</comment>
<comment type="interaction">
    <interactant intactId="EBI-1127478">
        <id>P76407</id>
    </interactant>
    <interactant intactId="EBI-547808">
        <id>P0ABH7</id>
        <label>gltA</label>
    </interactant>
    <organismsDiffer>false</organismsDiffer>
    <experiments>3</experiments>
</comment>
<comment type="subcellular location">
    <subcellularLocation>
        <location evidence="3">Cytoplasm</location>
    </subcellularLocation>
</comment>
<comment type="similarity">
    <text evidence="4">Belongs to the diacylglycerol/lipid kinase family. YegS lipid kinase subfamily.</text>
</comment>
<feature type="chain" id="PRO_0000169129" description="Lipid kinase YegS">
    <location>
        <begin position="1"/>
        <end position="299"/>
    </location>
</feature>
<feature type="domain" description="DAGKc">
    <location>
        <begin position="2"/>
        <end position="133"/>
    </location>
</feature>
<feature type="active site" description="Proton acceptor" evidence="1">
    <location>
        <position position="271"/>
    </location>
</feature>
<feature type="binding site" evidence="1">
    <location>
        <position position="40"/>
    </location>
    <ligand>
        <name>ATP</name>
        <dbReference type="ChEBI" id="CHEBI:30616"/>
    </ligand>
</feature>
<feature type="binding site" evidence="1">
    <location>
        <begin position="66"/>
        <end position="72"/>
    </location>
    <ligand>
        <name>ATP</name>
        <dbReference type="ChEBI" id="CHEBI:30616"/>
    </ligand>
</feature>
<feature type="binding site" evidence="1">
    <location>
        <position position="95"/>
    </location>
    <ligand>
        <name>ATP</name>
        <dbReference type="ChEBI" id="CHEBI:30616"/>
    </ligand>
</feature>
<feature type="binding site" evidence="3">
    <location>
        <position position="215"/>
    </location>
    <ligand>
        <name>Mg(2+)</name>
        <dbReference type="ChEBI" id="CHEBI:18420"/>
    </ligand>
</feature>
<feature type="binding site" evidence="3">
    <location>
        <position position="218"/>
    </location>
    <ligand>
        <name>Mg(2+)</name>
        <dbReference type="ChEBI" id="CHEBI:18420"/>
    </ligand>
</feature>
<feature type="binding site" evidence="3">
    <location>
        <position position="220"/>
    </location>
    <ligand>
        <name>Mg(2+)</name>
        <dbReference type="ChEBI" id="CHEBI:18420"/>
    </ligand>
</feature>
<feature type="strand" evidence="5">
    <location>
        <begin position="7"/>
        <end position="11"/>
    </location>
</feature>
<feature type="strand" evidence="5">
    <location>
        <begin position="13"/>
        <end position="15"/>
    </location>
</feature>
<feature type="helix" evidence="5">
    <location>
        <begin position="19"/>
        <end position="29"/>
    </location>
</feature>
<feature type="turn" evidence="5">
    <location>
        <begin position="30"/>
        <end position="32"/>
    </location>
</feature>
<feature type="strand" evidence="5">
    <location>
        <begin position="35"/>
        <end position="39"/>
    </location>
</feature>
<feature type="helix" evidence="5">
    <location>
        <begin position="45"/>
        <end position="56"/>
    </location>
</feature>
<feature type="strand" evidence="5">
    <location>
        <begin position="59"/>
        <end position="66"/>
    </location>
</feature>
<feature type="helix" evidence="5">
    <location>
        <begin position="67"/>
        <end position="79"/>
    </location>
</feature>
<feature type="strand" evidence="5">
    <location>
        <begin position="87"/>
        <end position="92"/>
    </location>
</feature>
<feature type="strand" evidence="5">
    <location>
        <begin position="94"/>
        <end position="96"/>
    </location>
</feature>
<feature type="helix" evidence="5">
    <location>
        <begin position="98"/>
        <end position="102"/>
    </location>
</feature>
<feature type="helix" evidence="5">
    <location>
        <begin position="109"/>
        <end position="118"/>
    </location>
</feature>
<feature type="strand" evidence="5">
    <location>
        <begin position="119"/>
        <end position="129"/>
    </location>
</feature>
<feature type="turn" evidence="6">
    <location>
        <begin position="130"/>
        <end position="132"/>
    </location>
</feature>
<feature type="strand" evidence="5">
    <location>
        <begin position="134"/>
        <end position="146"/>
    </location>
</feature>
<feature type="helix" evidence="5">
    <location>
        <begin position="160"/>
        <end position="168"/>
    </location>
</feature>
<feature type="strand" evidence="5">
    <location>
        <begin position="172"/>
        <end position="176"/>
    </location>
</feature>
<feature type="strand" evidence="5">
    <location>
        <begin position="178"/>
        <end position="184"/>
    </location>
</feature>
<feature type="strand" evidence="5">
    <location>
        <begin position="187"/>
        <end position="202"/>
    </location>
</feature>
<feature type="turn" evidence="5">
    <location>
        <begin position="205"/>
        <end position="207"/>
    </location>
</feature>
<feature type="strand" evidence="6">
    <location>
        <begin position="208"/>
        <end position="211"/>
    </location>
</feature>
<feature type="strand" evidence="5">
    <location>
        <begin position="221"/>
        <end position="226"/>
    </location>
</feature>
<feature type="helix" evidence="5">
    <location>
        <begin position="233"/>
        <end position="240"/>
    </location>
</feature>
<feature type="strand" evidence="5">
    <location>
        <begin position="248"/>
        <end position="268"/>
    </location>
</feature>
<feature type="strand" evidence="5">
    <location>
        <begin position="271"/>
        <end position="291"/>
    </location>
</feature>
<protein>
    <recommendedName>
        <fullName>Lipid kinase YegS</fullName>
        <ecNumber>2.7.1.-</ecNumber>
    </recommendedName>
</protein>
<gene>
    <name type="primary">yegS</name>
    <name type="ordered locus">b2086</name>
    <name type="ordered locus">JW2070</name>
</gene>